<name>CYB_MYOAO</name>
<dbReference type="EMBL" id="AF437781">
    <property type="protein sequence ID" value="AAQ04515.1"/>
    <property type="molecule type" value="Genomic_DNA"/>
</dbReference>
<dbReference type="EMBL" id="AF437782">
    <property type="protein sequence ID" value="AAQ04516.1"/>
    <property type="molecule type" value="Genomic_DNA"/>
</dbReference>
<dbReference type="SMR" id="Q71MR6"/>
<dbReference type="GO" id="GO:0005743">
    <property type="term" value="C:mitochondrial inner membrane"/>
    <property type="evidence" value="ECO:0007669"/>
    <property type="project" value="UniProtKB-SubCell"/>
</dbReference>
<dbReference type="GO" id="GO:0045275">
    <property type="term" value="C:respiratory chain complex III"/>
    <property type="evidence" value="ECO:0007669"/>
    <property type="project" value="InterPro"/>
</dbReference>
<dbReference type="GO" id="GO:0046872">
    <property type="term" value="F:metal ion binding"/>
    <property type="evidence" value="ECO:0007669"/>
    <property type="project" value="UniProtKB-KW"/>
</dbReference>
<dbReference type="GO" id="GO:0008121">
    <property type="term" value="F:ubiquinol-cytochrome-c reductase activity"/>
    <property type="evidence" value="ECO:0007669"/>
    <property type="project" value="InterPro"/>
</dbReference>
<dbReference type="GO" id="GO:0006122">
    <property type="term" value="P:mitochondrial electron transport, ubiquinol to cytochrome c"/>
    <property type="evidence" value="ECO:0007669"/>
    <property type="project" value="TreeGrafter"/>
</dbReference>
<dbReference type="CDD" id="cd00290">
    <property type="entry name" value="cytochrome_b_C"/>
    <property type="match status" value="1"/>
</dbReference>
<dbReference type="CDD" id="cd00284">
    <property type="entry name" value="Cytochrome_b_N"/>
    <property type="match status" value="1"/>
</dbReference>
<dbReference type="FunFam" id="1.20.810.10:FF:000002">
    <property type="entry name" value="Cytochrome b"/>
    <property type="match status" value="1"/>
</dbReference>
<dbReference type="Gene3D" id="1.20.810.10">
    <property type="entry name" value="Cytochrome Bc1 Complex, Chain C"/>
    <property type="match status" value="1"/>
</dbReference>
<dbReference type="InterPro" id="IPR005798">
    <property type="entry name" value="Cyt_b/b6_C"/>
</dbReference>
<dbReference type="InterPro" id="IPR036150">
    <property type="entry name" value="Cyt_b/b6_C_sf"/>
</dbReference>
<dbReference type="InterPro" id="IPR005797">
    <property type="entry name" value="Cyt_b/b6_N"/>
</dbReference>
<dbReference type="InterPro" id="IPR027387">
    <property type="entry name" value="Cytb/b6-like_sf"/>
</dbReference>
<dbReference type="InterPro" id="IPR030689">
    <property type="entry name" value="Cytochrome_b"/>
</dbReference>
<dbReference type="InterPro" id="IPR048260">
    <property type="entry name" value="Cytochrome_b_C_euk/bac"/>
</dbReference>
<dbReference type="InterPro" id="IPR048259">
    <property type="entry name" value="Cytochrome_b_N_euk/bac"/>
</dbReference>
<dbReference type="InterPro" id="IPR016174">
    <property type="entry name" value="Di-haem_cyt_TM"/>
</dbReference>
<dbReference type="PANTHER" id="PTHR19271">
    <property type="entry name" value="CYTOCHROME B"/>
    <property type="match status" value="1"/>
</dbReference>
<dbReference type="PANTHER" id="PTHR19271:SF16">
    <property type="entry name" value="CYTOCHROME B"/>
    <property type="match status" value="1"/>
</dbReference>
<dbReference type="Pfam" id="PF00032">
    <property type="entry name" value="Cytochrom_B_C"/>
    <property type="match status" value="1"/>
</dbReference>
<dbReference type="Pfam" id="PF00033">
    <property type="entry name" value="Cytochrome_B"/>
    <property type="match status" value="1"/>
</dbReference>
<dbReference type="PIRSF" id="PIRSF038885">
    <property type="entry name" value="COB"/>
    <property type="match status" value="1"/>
</dbReference>
<dbReference type="SUPFAM" id="SSF81648">
    <property type="entry name" value="a domain/subunit of cytochrome bc1 complex (Ubiquinol-cytochrome c reductase)"/>
    <property type="match status" value="1"/>
</dbReference>
<dbReference type="SUPFAM" id="SSF81342">
    <property type="entry name" value="Transmembrane di-heme cytochromes"/>
    <property type="match status" value="1"/>
</dbReference>
<dbReference type="PROSITE" id="PS51003">
    <property type="entry name" value="CYTB_CTER"/>
    <property type="match status" value="1"/>
</dbReference>
<dbReference type="PROSITE" id="PS51002">
    <property type="entry name" value="CYTB_NTER"/>
    <property type="match status" value="1"/>
</dbReference>
<sequence>MTHLRKSHPLIKIINHSFIDLPTPSNISAWWNFGSLLGICLMMQIITGLFLAMHYTADTTTAFSSVTHICRDVNYGWLIRYLHANGASMFFILIYLHIGRGVYYGSYTFSETWNIGVVLLLAVMATAFMGYVLPWGQMSFWGATVITNLLSAIPYIGPTLVEWIWGGFSVDKATLTRFFAFHFIFPFIIVALVMTHLLFLHETGSNNPSGLNSDSDKIPFHPYYTIKDIMGFMFMGFTALLLVLFSPDLLGDPDNYTPANPLNTPPHIKPEWYFLFAYAILRSIPNKLGGVMALLASILILALFPILHLSKQRSMTFRPISQCLLWVLAANLVILTWIGGQPVEHPYIMIGQLASITYFLTILILMPLASLMENKILKW</sequence>
<gene>
    <name type="primary">MT-CYB</name>
    <name type="synonym">COB</name>
    <name type="synonym">CYTB</name>
    <name type="synonym">MTCYB</name>
</gene>
<protein>
    <recommendedName>
        <fullName>Cytochrome b</fullName>
    </recommendedName>
    <alternativeName>
        <fullName>Complex III subunit 3</fullName>
    </alternativeName>
    <alternativeName>
        <fullName>Complex III subunit III</fullName>
    </alternativeName>
    <alternativeName>
        <fullName>Cytochrome b-c1 complex subunit 3</fullName>
    </alternativeName>
    <alternativeName>
        <fullName>Ubiquinol-cytochrome-c reductase complex cytochrome b subunit</fullName>
    </alternativeName>
</protein>
<organism>
    <name type="scientific">Myoprocta acouchy</name>
    <name type="common">Red acouchi</name>
    <dbReference type="NCBI Taxonomy" id="181542"/>
    <lineage>
        <taxon>Eukaryota</taxon>
        <taxon>Metazoa</taxon>
        <taxon>Chordata</taxon>
        <taxon>Craniata</taxon>
        <taxon>Vertebrata</taxon>
        <taxon>Euteleostomi</taxon>
        <taxon>Mammalia</taxon>
        <taxon>Eutheria</taxon>
        <taxon>Euarchontoglires</taxon>
        <taxon>Glires</taxon>
        <taxon>Rodentia</taxon>
        <taxon>Hystricomorpha</taxon>
        <taxon>Dasyproctidae</taxon>
        <taxon>Myoprocta</taxon>
    </lineage>
</organism>
<evidence type="ECO:0000250" key="1"/>
<evidence type="ECO:0000250" key="2">
    <source>
        <dbReference type="UniProtKB" id="P00157"/>
    </source>
</evidence>
<evidence type="ECO:0000255" key="3">
    <source>
        <dbReference type="PROSITE-ProRule" id="PRU00967"/>
    </source>
</evidence>
<evidence type="ECO:0000255" key="4">
    <source>
        <dbReference type="PROSITE-ProRule" id="PRU00968"/>
    </source>
</evidence>
<proteinExistence type="inferred from homology"/>
<accession>Q71MR6</accession>
<keyword id="KW-0249">Electron transport</keyword>
<keyword id="KW-0349">Heme</keyword>
<keyword id="KW-0408">Iron</keyword>
<keyword id="KW-0472">Membrane</keyword>
<keyword id="KW-0479">Metal-binding</keyword>
<keyword id="KW-0496">Mitochondrion</keyword>
<keyword id="KW-0999">Mitochondrion inner membrane</keyword>
<keyword id="KW-0679">Respiratory chain</keyword>
<keyword id="KW-0812">Transmembrane</keyword>
<keyword id="KW-1133">Transmembrane helix</keyword>
<keyword id="KW-0813">Transport</keyword>
<keyword id="KW-0830">Ubiquinone</keyword>
<feature type="chain" id="PRO_0000255097" description="Cytochrome b">
    <location>
        <begin position="1"/>
        <end position="379"/>
    </location>
</feature>
<feature type="transmembrane region" description="Helical" evidence="2">
    <location>
        <begin position="33"/>
        <end position="53"/>
    </location>
</feature>
<feature type="transmembrane region" description="Helical" evidence="2">
    <location>
        <begin position="77"/>
        <end position="98"/>
    </location>
</feature>
<feature type="transmembrane region" description="Helical" evidence="2">
    <location>
        <begin position="113"/>
        <end position="133"/>
    </location>
</feature>
<feature type="transmembrane region" description="Helical" evidence="2">
    <location>
        <begin position="178"/>
        <end position="198"/>
    </location>
</feature>
<feature type="transmembrane region" description="Helical" evidence="2">
    <location>
        <begin position="226"/>
        <end position="246"/>
    </location>
</feature>
<feature type="transmembrane region" description="Helical" evidence="2">
    <location>
        <begin position="288"/>
        <end position="308"/>
    </location>
</feature>
<feature type="transmembrane region" description="Helical" evidence="2">
    <location>
        <begin position="320"/>
        <end position="340"/>
    </location>
</feature>
<feature type="transmembrane region" description="Helical" evidence="2">
    <location>
        <begin position="347"/>
        <end position="367"/>
    </location>
</feature>
<feature type="binding site" description="axial binding residue" evidence="2">
    <location>
        <position position="83"/>
    </location>
    <ligand>
        <name>heme b</name>
        <dbReference type="ChEBI" id="CHEBI:60344"/>
        <label>b562</label>
    </ligand>
    <ligandPart>
        <name>Fe</name>
        <dbReference type="ChEBI" id="CHEBI:18248"/>
    </ligandPart>
</feature>
<feature type="binding site" description="axial binding residue" evidence="2">
    <location>
        <position position="97"/>
    </location>
    <ligand>
        <name>heme b</name>
        <dbReference type="ChEBI" id="CHEBI:60344"/>
        <label>b566</label>
    </ligand>
    <ligandPart>
        <name>Fe</name>
        <dbReference type="ChEBI" id="CHEBI:18248"/>
    </ligandPart>
</feature>
<feature type="binding site" description="axial binding residue" evidence="2">
    <location>
        <position position="182"/>
    </location>
    <ligand>
        <name>heme b</name>
        <dbReference type="ChEBI" id="CHEBI:60344"/>
        <label>b562</label>
    </ligand>
    <ligandPart>
        <name>Fe</name>
        <dbReference type="ChEBI" id="CHEBI:18248"/>
    </ligandPart>
</feature>
<feature type="binding site" description="axial binding residue" evidence="2">
    <location>
        <position position="196"/>
    </location>
    <ligand>
        <name>heme b</name>
        <dbReference type="ChEBI" id="CHEBI:60344"/>
        <label>b566</label>
    </ligand>
    <ligandPart>
        <name>Fe</name>
        <dbReference type="ChEBI" id="CHEBI:18248"/>
    </ligandPart>
</feature>
<feature type="binding site" evidence="2">
    <location>
        <position position="201"/>
    </location>
    <ligand>
        <name>a ubiquinone</name>
        <dbReference type="ChEBI" id="CHEBI:16389"/>
    </ligand>
</feature>
<geneLocation type="mitochondrion"/>
<reference key="1">
    <citation type="journal article" date="2004" name="Biol. J. Linn. Soc. Lond.">
        <title>Geographic patterns of genetic variation in four Neotropical rodents: conservation implications for small game mammals in French Guiana.</title>
        <authorList>
            <person name="Jansen van Vuuren B."/>
            <person name="Kinet S."/>
            <person name="Chopelet J."/>
            <person name="Catzeflis F."/>
        </authorList>
    </citation>
    <scope>NUCLEOTIDE SEQUENCE [GENOMIC DNA]</scope>
</reference>
<comment type="function">
    <text evidence="2">Component of the ubiquinol-cytochrome c reductase complex (complex III or cytochrome b-c1 complex) that is part of the mitochondrial respiratory chain. The b-c1 complex mediates electron transfer from ubiquinol to cytochrome c. Contributes to the generation of a proton gradient across the mitochondrial membrane that is then used for ATP synthesis.</text>
</comment>
<comment type="cofactor">
    <cofactor evidence="2">
        <name>heme b</name>
        <dbReference type="ChEBI" id="CHEBI:60344"/>
    </cofactor>
    <text evidence="2">Binds 2 heme b groups non-covalently.</text>
</comment>
<comment type="subunit">
    <text evidence="2">The cytochrome bc1 complex contains 11 subunits: 3 respiratory subunits (MT-CYB, CYC1 and UQCRFS1), 2 core proteins (UQCRC1 and UQCRC2) and 6 low-molecular weight proteins (UQCRH/QCR6, UQCRB/QCR7, UQCRQ/QCR8, UQCR10/QCR9, UQCR11/QCR10 and a cleavage product of UQCRFS1). This cytochrome bc1 complex then forms a dimer.</text>
</comment>
<comment type="subcellular location">
    <subcellularLocation>
        <location evidence="2">Mitochondrion inner membrane</location>
        <topology evidence="2">Multi-pass membrane protein</topology>
    </subcellularLocation>
</comment>
<comment type="miscellaneous">
    <text evidence="1">Heme 1 (or BL or b562) is low-potential and absorbs at about 562 nm, and heme 2 (or BH or b566) is high-potential and absorbs at about 566 nm.</text>
</comment>
<comment type="similarity">
    <text evidence="3 4">Belongs to the cytochrome b family.</text>
</comment>
<comment type="caution">
    <text evidence="2">The full-length protein contains only eight transmembrane helices, not nine as predicted by bioinformatics tools.</text>
</comment>